<organism>
    <name type="scientific">Methanocaldococcus jannaschii (strain ATCC 43067 / DSM 2661 / JAL-1 / JCM 10045 / NBRC 100440)</name>
    <name type="common">Methanococcus jannaschii</name>
    <dbReference type="NCBI Taxonomy" id="243232"/>
    <lineage>
        <taxon>Archaea</taxon>
        <taxon>Methanobacteriati</taxon>
        <taxon>Methanobacteriota</taxon>
        <taxon>Methanomada group</taxon>
        <taxon>Methanococci</taxon>
        <taxon>Methanococcales</taxon>
        <taxon>Methanocaldococcaceae</taxon>
        <taxon>Methanocaldococcus</taxon>
    </lineage>
</organism>
<protein>
    <recommendedName>
        <fullName evidence="1">5,10-methylenetetrahydromethanopterin reductase</fullName>
        <ecNumber evidence="1">1.5.98.2</ecNumber>
    </recommendedName>
    <alternativeName>
        <fullName evidence="1">Coenzyme F420-dependent N(5),N(10)-methylenetetrahydromethanopterin reductase</fullName>
    </alternativeName>
    <alternativeName>
        <fullName evidence="1">Methylene-H(4)MPT reductase</fullName>
    </alternativeName>
</protein>
<sequence length="331" mass="35353">MKFGIEFVPNEPIQKLCYYVKLAEDNGFEYCWITDHYNNRNVYMALTAIAMNTNKIKLGPGVTNPYVRSPAITASAIATLDELSGGRAVLGIGPGDKATFDALGIEWVKPVTTLKESIEVIRKLLAGERVSYEGKVVKIAGAALAVKPIQKAVPVYMGAQGPKMLETAGMIADGVLINASNPKDFEAAIPLIKKGAEAAGRSMDEIDVAAYACMSVDKNADKAKQAAVPVVAFIAAGSPPVVLERHGIDMEKVEAIRNALKSGNFPEAFKNVDDTMLEAFSIYGTPEDVVEKCKKLAEMGVTQIVAGSPIGPNKETAIKLIGKKVIPALKE</sequence>
<gene>
    <name evidence="1" type="primary">mer</name>
    <name type="ordered locus">MJ1534</name>
</gene>
<proteinExistence type="evidence at protein level"/>
<feature type="chain" id="PRO_0000084807" description="5,10-methylenetetrahydromethanopterin reductase">
    <location>
        <begin position="1"/>
        <end position="331"/>
    </location>
</feature>
<feature type="strand" evidence="2">
    <location>
        <begin position="2"/>
        <end position="7"/>
    </location>
</feature>
<feature type="helix" evidence="2">
    <location>
        <begin position="13"/>
        <end position="25"/>
    </location>
</feature>
<feature type="strand" evidence="2">
    <location>
        <begin position="30"/>
        <end position="33"/>
    </location>
</feature>
<feature type="helix" evidence="2">
    <location>
        <begin position="42"/>
        <end position="51"/>
    </location>
</feature>
<feature type="strand" evidence="2">
    <location>
        <begin position="57"/>
        <end position="61"/>
    </location>
</feature>
<feature type="strand" evidence="2">
    <location>
        <begin position="65"/>
        <end position="68"/>
    </location>
</feature>
<feature type="helix" evidence="2">
    <location>
        <begin position="70"/>
        <end position="83"/>
    </location>
</feature>
<feature type="strand" evidence="2">
    <location>
        <begin position="90"/>
        <end position="92"/>
    </location>
</feature>
<feature type="helix" evidence="2">
    <location>
        <begin position="97"/>
        <end position="103"/>
    </location>
</feature>
<feature type="helix" evidence="2">
    <location>
        <begin position="110"/>
        <end position="125"/>
    </location>
</feature>
<feature type="strand" evidence="2">
    <location>
        <begin position="130"/>
        <end position="133"/>
    </location>
</feature>
<feature type="strand" evidence="2">
    <location>
        <begin position="138"/>
        <end position="142"/>
    </location>
</feature>
<feature type="strand" evidence="2">
    <location>
        <begin position="149"/>
        <end position="152"/>
    </location>
</feature>
<feature type="strand" evidence="2">
    <location>
        <begin position="155"/>
        <end position="158"/>
    </location>
</feature>
<feature type="helix" evidence="2">
    <location>
        <begin position="162"/>
        <end position="171"/>
    </location>
</feature>
<feature type="strand" evidence="2">
    <location>
        <begin position="173"/>
        <end position="177"/>
    </location>
</feature>
<feature type="helix" evidence="2">
    <location>
        <begin position="182"/>
        <end position="198"/>
    </location>
</feature>
<feature type="helix" evidence="2">
    <location>
        <begin position="203"/>
        <end position="205"/>
    </location>
</feature>
<feature type="strand" evidence="2">
    <location>
        <begin position="207"/>
        <end position="216"/>
    </location>
</feature>
<feature type="helix" evidence="2">
    <location>
        <begin position="220"/>
        <end position="237"/>
    </location>
</feature>
<feature type="helix" evidence="2">
    <location>
        <begin position="240"/>
        <end position="245"/>
    </location>
</feature>
<feature type="helix" evidence="2">
    <location>
        <begin position="250"/>
        <end position="261"/>
    </location>
</feature>
<feature type="helix" evidence="2">
    <location>
        <begin position="265"/>
        <end position="270"/>
    </location>
</feature>
<feature type="helix" evidence="2">
    <location>
        <begin position="274"/>
        <end position="280"/>
    </location>
</feature>
<feature type="strand" evidence="2">
    <location>
        <begin position="282"/>
        <end position="285"/>
    </location>
</feature>
<feature type="helix" evidence="2">
    <location>
        <begin position="286"/>
        <end position="298"/>
    </location>
</feature>
<feature type="strand" evidence="2">
    <location>
        <begin position="303"/>
        <end position="313"/>
    </location>
</feature>
<feature type="helix" evidence="2">
    <location>
        <begin position="314"/>
        <end position="324"/>
    </location>
</feature>
<feature type="helix" evidence="2">
    <location>
        <begin position="326"/>
        <end position="328"/>
    </location>
</feature>
<accession>Q58929</accession>
<dbReference type="EC" id="1.5.98.2" evidence="1"/>
<dbReference type="EMBL" id="L77117">
    <property type="protein sequence ID" value="AAB99555.1"/>
    <property type="molecule type" value="Genomic_DNA"/>
</dbReference>
<dbReference type="RefSeq" id="WP_010871058.1">
    <property type="nucleotide sequence ID" value="NC_000909.1"/>
</dbReference>
<dbReference type="PDB" id="8QPL">
    <property type="method" value="X-ray"/>
    <property type="resolution" value="1.90 A"/>
    <property type="chains" value="A/B=1-331"/>
</dbReference>
<dbReference type="PDB" id="8QPM">
    <property type="method" value="X-ray"/>
    <property type="resolution" value="1.80 A"/>
    <property type="chains" value="A/B/C/D=1-331"/>
</dbReference>
<dbReference type="PDB" id="8QQ8">
    <property type="method" value="X-ray"/>
    <property type="resolution" value="2.00 A"/>
    <property type="chains" value="A=1-331"/>
</dbReference>
<dbReference type="PDBsum" id="8QPL"/>
<dbReference type="PDBsum" id="8QPM"/>
<dbReference type="PDBsum" id="8QQ8"/>
<dbReference type="SMR" id="Q58929"/>
<dbReference type="FunCoup" id="Q58929">
    <property type="interactions" value="90"/>
</dbReference>
<dbReference type="STRING" id="243232.MJ_1534"/>
<dbReference type="PaxDb" id="243232-MJ_1534"/>
<dbReference type="EnsemblBacteria" id="AAB99555">
    <property type="protein sequence ID" value="AAB99555"/>
    <property type="gene ID" value="MJ_1534"/>
</dbReference>
<dbReference type="GeneID" id="1452442"/>
<dbReference type="KEGG" id="mja:MJ_1534"/>
<dbReference type="eggNOG" id="arCOG02410">
    <property type="taxonomic scope" value="Archaea"/>
</dbReference>
<dbReference type="HOGENOM" id="CLU_027853_5_3_2"/>
<dbReference type="InParanoid" id="Q58929"/>
<dbReference type="OrthoDB" id="213164at2157"/>
<dbReference type="PhylomeDB" id="Q58929"/>
<dbReference type="UniPathway" id="UPA00640">
    <property type="reaction ID" value="UER00697"/>
</dbReference>
<dbReference type="Proteomes" id="UP000000805">
    <property type="component" value="Chromosome"/>
</dbReference>
<dbReference type="GO" id="GO:0005737">
    <property type="term" value="C:cytoplasm"/>
    <property type="evidence" value="ECO:0007669"/>
    <property type="project" value="UniProtKB-SubCell"/>
</dbReference>
<dbReference type="GO" id="GO:0018537">
    <property type="term" value="F:coenzyme F420-dependent N5,N10-methenyltetrahydromethanopterin reductase activity"/>
    <property type="evidence" value="ECO:0007669"/>
    <property type="project" value="UniProtKB-UniRule"/>
</dbReference>
<dbReference type="GO" id="GO:0016705">
    <property type="term" value="F:oxidoreductase activity, acting on paired donors, with incorporation or reduction of molecular oxygen"/>
    <property type="evidence" value="ECO:0007669"/>
    <property type="project" value="InterPro"/>
</dbReference>
<dbReference type="GO" id="GO:0019386">
    <property type="term" value="P:methanogenesis, from carbon dioxide"/>
    <property type="evidence" value="ECO:0007669"/>
    <property type="project" value="UniProtKB-UniRule"/>
</dbReference>
<dbReference type="GO" id="GO:0006730">
    <property type="term" value="P:one-carbon metabolic process"/>
    <property type="evidence" value="ECO:0007669"/>
    <property type="project" value="UniProtKB-UniRule"/>
</dbReference>
<dbReference type="CDD" id="cd01097">
    <property type="entry name" value="Tetrahydromethanopterin_reductase"/>
    <property type="match status" value="1"/>
</dbReference>
<dbReference type="Gene3D" id="3.20.20.30">
    <property type="entry name" value="Luciferase-like domain"/>
    <property type="match status" value="1"/>
</dbReference>
<dbReference type="HAMAP" id="MF_01091">
    <property type="entry name" value="F420_mer"/>
    <property type="match status" value="1"/>
</dbReference>
<dbReference type="InterPro" id="IPR050564">
    <property type="entry name" value="F420-G6PD/mer"/>
</dbReference>
<dbReference type="InterPro" id="IPR011251">
    <property type="entry name" value="Luciferase-like_dom"/>
</dbReference>
<dbReference type="InterPro" id="IPR036661">
    <property type="entry name" value="Luciferase-like_sf"/>
</dbReference>
<dbReference type="InterPro" id="IPR019946">
    <property type="entry name" value="MeH4methanopterin_reductase"/>
</dbReference>
<dbReference type="NCBIfam" id="TIGR03555">
    <property type="entry name" value="F420_mer"/>
    <property type="match status" value="1"/>
</dbReference>
<dbReference type="NCBIfam" id="NF002619">
    <property type="entry name" value="PRK02271.1"/>
    <property type="match status" value="1"/>
</dbReference>
<dbReference type="PANTHER" id="PTHR43244">
    <property type="match status" value="1"/>
</dbReference>
<dbReference type="PANTHER" id="PTHR43244:SF1">
    <property type="entry name" value="5,10-METHYLENETETRAHYDROMETHANOPTERIN REDUCTASE"/>
    <property type="match status" value="1"/>
</dbReference>
<dbReference type="Pfam" id="PF00296">
    <property type="entry name" value="Bac_luciferase"/>
    <property type="match status" value="1"/>
</dbReference>
<dbReference type="SUPFAM" id="SSF51679">
    <property type="entry name" value="Bacterial luciferase-like"/>
    <property type="match status" value="1"/>
</dbReference>
<keyword id="KW-0002">3D-structure</keyword>
<keyword id="KW-0963">Cytoplasm</keyword>
<keyword id="KW-0484">Methanogenesis</keyword>
<keyword id="KW-0554">One-carbon metabolism</keyword>
<keyword id="KW-0560">Oxidoreductase</keyword>
<keyword id="KW-1185">Reference proteome</keyword>
<reference key="1">
    <citation type="journal article" date="1996" name="Science">
        <title>Complete genome sequence of the methanogenic archaeon, Methanococcus jannaschii.</title>
        <authorList>
            <person name="Bult C.J."/>
            <person name="White O."/>
            <person name="Olsen G.J."/>
            <person name="Zhou L."/>
            <person name="Fleischmann R.D."/>
            <person name="Sutton G.G."/>
            <person name="Blake J.A."/>
            <person name="FitzGerald L.M."/>
            <person name="Clayton R.A."/>
            <person name="Gocayne J.D."/>
            <person name="Kerlavage A.R."/>
            <person name="Dougherty B.A."/>
            <person name="Tomb J.-F."/>
            <person name="Adams M.D."/>
            <person name="Reich C.I."/>
            <person name="Overbeek R."/>
            <person name="Kirkness E.F."/>
            <person name="Weinstock K.G."/>
            <person name="Merrick J.M."/>
            <person name="Glodek A."/>
            <person name="Scott J.L."/>
            <person name="Geoghagen N.S.M."/>
            <person name="Weidman J.F."/>
            <person name="Fuhrmann J.L."/>
            <person name="Nguyen D."/>
            <person name="Utterback T.R."/>
            <person name="Kelley J.M."/>
            <person name="Peterson J.D."/>
            <person name="Sadow P.W."/>
            <person name="Hanna M.C."/>
            <person name="Cotton M.D."/>
            <person name="Roberts K.M."/>
            <person name="Hurst M.A."/>
            <person name="Kaine B.P."/>
            <person name="Borodovsky M."/>
            <person name="Klenk H.-P."/>
            <person name="Fraser C.M."/>
            <person name="Smith H.O."/>
            <person name="Woese C.R."/>
            <person name="Venter J.C."/>
        </authorList>
    </citation>
    <scope>NUCLEOTIDE SEQUENCE [LARGE SCALE GENOMIC DNA]</scope>
    <source>
        <strain>ATCC 43067 / DSM 2661 / JAL-1 / JCM 10045 / NBRC 100440</strain>
    </source>
</reference>
<name>MER_METJA</name>
<evidence type="ECO:0000255" key="1">
    <source>
        <dbReference type="HAMAP-Rule" id="MF_01091"/>
    </source>
</evidence>
<evidence type="ECO:0007829" key="2">
    <source>
        <dbReference type="PDB" id="8QPM"/>
    </source>
</evidence>
<comment type="function">
    <text evidence="1">Catalyzes the reversible reduction of methylene-H(4)MPT to methyl-H(4)MPT.</text>
</comment>
<comment type="catalytic activity">
    <reaction evidence="1">
        <text>5-methyl-5,6,7,8-tetrahydromethanopterin + oxidized coenzyme F420-(gamma-L-Glu)(n) + H(+) = 5,10-methylenetetrahydromethanopterin + reduced coenzyme F420-(gamma-L-Glu)(n)</text>
        <dbReference type="Rhea" id="RHEA:21144"/>
        <dbReference type="Rhea" id="RHEA-COMP:12939"/>
        <dbReference type="Rhea" id="RHEA-COMP:14378"/>
        <dbReference type="ChEBI" id="CHEBI:15378"/>
        <dbReference type="ChEBI" id="CHEBI:57818"/>
        <dbReference type="ChEBI" id="CHEBI:58116"/>
        <dbReference type="ChEBI" id="CHEBI:133980"/>
        <dbReference type="ChEBI" id="CHEBI:139511"/>
        <dbReference type="EC" id="1.5.98.2"/>
    </reaction>
</comment>
<comment type="pathway">
    <text evidence="1">One-carbon metabolism; methanogenesis from CO(2); methyl-coenzyme M from 5,10-methylene-5,6,7,8-tetrahydromethanopterin: step 1/2.</text>
</comment>
<comment type="subcellular location">
    <subcellularLocation>
        <location evidence="1">Cytoplasm</location>
    </subcellularLocation>
</comment>
<comment type="similarity">
    <text evidence="1">Belongs to the mer family.</text>
</comment>